<comment type="function">
    <text evidence="1">Involved in the catabolism of oxalate and in the adapatation to low pH via the induction of the oxalate-dependent acid tolerance response (ATR). Catalyzes the transfer of the CoA moiety from formyl-CoA to oxalate (By similarity).</text>
</comment>
<comment type="catalytic activity">
    <reaction evidence="2">
        <text>formyl-CoA + oxalate = oxalyl-CoA + formate</text>
        <dbReference type="Rhea" id="RHEA:16545"/>
        <dbReference type="ChEBI" id="CHEBI:15740"/>
        <dbReference type="ChEBI" id="CHEBI:30623"/>
        <dbReference type="ChEBI" id="CHEBI:57376"/>
        <dbReference type="ChEBI" id="CHEBI:57388"/>
        <dbReference type="EC" id="2.8.3.16"/>
    </reaction>
</comment>
<comment type="pathway">
    <text evidence="2">Metabolic intermediate degradation; oxalate degradation; CO(2) and formate from oxalate: step 1/2.</text>
</comment>
<comment type="subunit">
    <text evidence="2">Homodimer.</text>
</comment>
<comment type="similarity">
    <text evidence="2">Belongs to the CoA-transferase III family. Frc subfamily.</text>
</comment>
<dbReference type="EC" id="2.8.3.16" evidence="2"/>
<dbReference type="EMBL" id="CP001063">
    <property type="protein sequence ID" value="ACD07845.1"/>
    <property type="molecule type" value="Genomic_DNA"/>
</dbReference>
<dbReference type="RefSeq" id="WP_000106760.1">
    <property type="nucleotide sequence ID" value="NC_010658.1"/>
</dbReference>
<dbReference type="SMR" id="B2TWX3"/>
<dbReference type="STRING" id="344609.SbBS512_E2743"/>
<dbReference type="KEGG" id="sbc:SbBS512_E2743"/>
<dbReference type="HOGENOM" id="CLU_033975_2_1_6"/>
<dbReference type="UniPathway" id="UPA00540">
    <property type="reaction ID" value="UER00598"/>
</dbReference>
<dbReference type="Proteomes" id="UP000001030">
    <property type="component" value="Chromosome"/>
</dbReference>
<dbReference type="GO" id="GO:0033608">
    <property type="term" value="F:formyl-CoA transferase activity"/>
    <property type="evidence" value="ECO:0007669"/>
    <property type="project" value="UniProtKB-EC"/>
</dbReference>
<dbReference type="GO" id="GO:0033611">
    <property type="term" value="P:oxalate catabolic process"/>
    <property type="evidence" value="ECO:0007669"/>
    <property type="project" value="UniProtKB-UniRule"/>
</dbReference>
<dbReference type="Gene3D" id="3.40.50.10540">
    <property type="entry name" value="Crotonobetainyl-coa:carnitine coa-transferase, domain 1"/>
    <property type="match status" value="1"/>
</dbReference>
<dbReference type="Gene3D" id="3.30.1540.10">
    <property type="entry name" value="formyl-coa transferase, domain 3"/>
    <property type="match status" value="1"/>
</dbReference>
<dbReference type="HAMAP" id="MF_00742">
    <property type="entry name" value="Formyl_CoA_transfer"/>
    <property type="match status" value="1"/>
</dbReference>
<dbReference type="InterPro" id="IPR050483">
    <property type="entry name" value="CoA-transferase_III_domain"/>
</dbReference>
<dbReference type="InterPro" id="IPR003673">
    <property type="entry name" value="CoA-Trfase_fam_III"/>
</dbReference>
<dbReference type="InterPro" id="IPR044855">
    <property type="entry name" value="CoA-Trfase_III_dom3_sf"/>
</dbReference>
<dbReference type="InterPro" id="IPR023606">
    <property type="entry name" value="CoA-Trfase_III_dom_1_sf"/>
</dbReference>
<dbReference type="InterPro" id="IPR017659">
    <property type="entry name" value="Formyl_CoA_transfer"/>
</dbReference>
<dbReference type="NCBIfam" id="TIGR03253">
    <property type="entry name" value="oxalate_frc"/>
    <property type="match status" value="1"/>
</dbReference>
<dbReference type="NCBIfam" id="NF003809">
    <property type="entry name" value="PRK05398.1"/>
    <property type="match status" value="1"/>
</dbReference>
<dbReference type="PANTHER" id="PTHR48207">
    <property type="entry name" value="SUCCINATE--HYDROXYMETHYLGLUTARATE COA-TRANSFERASE"/>
    <property type="match status" value="1"/>
</dbReference>
<dbReference type="PANTHER" id="PTHR48207:SF3">
    <property type="entry name" value="SUCCINATE--HYDROXYMETHYLGLUTARATE COA-TRANSFERASE"/>
    <property type="match status" value="1"/>
</dbReference>
<dbReference type="Pfam" id="PF02515">
    <property type="entry name" value="CoA_transf_3"/>
    <property type="match status" value="1"/>
</dbReference>
<dbReference type="SUPFAM" id="SSF89796">
    <property type="entry name" value="CoA-transferase family III (CaiB/BaiF)"/>
    <property type="match status" value="1"/>
</dbReference>
<organism>
    <name type="scientific">Shigella boydii serotype 18 (strain CDC 3083-94 / BS512)</name>
    <dbReference type="NCBI Taxonomy" id="344609"/>
    <lineage>
        <taxon>Bacteria</taxon>
        <taxon>Pseudomonadati</taxon>
        <taxon>Pseudomonadota</taxon>
        <taxon>Gammaproteobacteria</taxon>
        <taxon>Enterobacterales</taxon>
        <taxon>Enterobacteriaceae</taxon>
        <taxon>Shigella</taxon>
    </lineage>
</organism>
<proteinExistence type="inferred from homology"/>
<feature type="chain" id="PRO_1000189584" description="Formyl-CoA:oxalate CoA-transferase">
    <location>
        <begin position="1"/>
        <end position="416"/>
    </location>
</feature>
<feature type="active site" description="Nucleophile" evidence="2">
    <location>
        <position position="169"/>
    </location>
</feature>
<feature type="binding site" evidence="1">
    <location>
        <begin position="17"/>
        <end position="18"/>
    </location>
    <ligand>
        <name>CoA</name>
        <dbReference type="ChEBI" id="CHEBI:57287"/>
    </ligand>
</feature>
<feature type="binding site" evidence="2">
    <location>
        <position position="38"/>
    </location>
    <ligand>
        <name>CoA</name>
        <dbReference type="ChEBI" id="CHEBI:57287"/>
    </ligand>
</feature>
<feature type="binding site" evidence="1">
    <location>
        <begin position="72"/>
        <end position="75"/>
    </location>
    <ligand>
        <name>CoA</name>
        <dbReference type="ChEBI" id="CHEBI:57287"/>
    </ligand>
</feature>
<feature type="binding site" evidence="1">
    <location>
        <begin position="96"/>
        <end position="98"/>
    </location>
    <ligand>
        <name>CoA</name>
        <dbReference type="ChEBI" id="CHEBI:57287"/>
    </ligand>
</feature>
<feature type="binding site" evidence="2">
    <location>
        <position position="104"/>
    </location>
    <ligand>
        <name>CoA</name>
        <dbReference type="ChEBI" id="CHEBI:57287"/>
    </ligand>
</feature>
<feature type="binding site" evidence="1">
    <location>
        <begin position="137"/>
        <end position="140"/>
    </location>
    <ligand>
        <name>CoA</name>
        <dbReference type="ChEBI" id="CHEBI:57287"/>
    </ligand>
</feature>
<feature type="binding site" evidence="1">
    <location>
        <begin position="248"/>
        <end position="250"/>
    </location>
    <ligand>
        <name>substrate</name>
    </ligand>
</feature>
<feature type="binding site" evidence="1">
    <location>
        <begin position="273"/>
        <end position="275"/>
    </location>
    <ligand>
        <name>CoA</name>
        <dbReference type="ChEBI" id="CHEBI:57287"/>
    </ligand>
</feature>
<sequence length="416" mass="45856">MSTPLQGIKVLDFTGVQSGPSCTQMLAWFGADVIKIERPGVGDVTRHQLRDIPDIDALYFTMLNSNKRSIELNTKTAEGKEVMEKLIREADILVENFHPGAIDHMGFTWEHIQEINPRLIFGSIKGFDECSPYVNVKAYENVAQAAGGAASTTGFWDGPPLVSAAALGDSNTGMHLLIGLLAALLHREKTGRGQRVTMSMQDAVLNLCRVKLRDQQRLDKLGYLEEYPQYPNGTFGDAVPRGGNAGGGGQPGWILKCKGWETDPNAYIYFTIQEQNWENTCKAIGKPEWITDPAYSTAHARQPHIFDIFAEIEKYTVTIDKHEAVAYLTQFDIPCAPVLSMKEISLDPSLRQSGSVVEVEQPLRGKYLTVGCPMKFSAFTPDIKAAPLLGEHTAVVLQELGYSDDEIAAMKQNHAI</sequence>
<protein>
    <recommendedName>
        <fullName>Formyl-CoA:oxalate CoA-transferase</fullName>
        <shortName>FCOCT</shortName>
        <ecNumber evidence="2">2.8.3.16</ecNumber>
    </recommendedName>
    <alternativeName>
        <fullName evidence="2">Formyl-coenzyme A transferase</fullName>
        <shortName evidence="2">Formyl-CoA transferase</shortName>
    </alternativeName>
</protein>
<name>FCTA_SHIB3</name>
<accession>B2TWX3</accession>
<reference key="1">
    <citation type="submission" date="2008-05" db="EMBL/GenBank/DDBJ databases">
        <title>Complete sequence of Shigella boydii serotype 18 strain BS512.</title>
        <authorList>
            <person name="Rasko D.A."/>
            <person name="Rosovitz M."/>
            <person name="Maurelli A.T."/>
            <person name="Myers G."/>
            <person name="Seshadri R."/>
            <person name="Cer R."/>
            <person name="Jiang L."/>
            <person name="Ravel J."/>
            <person name="Sebastian Y."/>
        </authorList>
    </citation>
    <scope>NUCLEOTIDE SEQUENCE [LARGE SCALE GENOMIC DNA]</scope>
    <source>
        <strain>CDC 3083-94 / BS512</strain>
    </source>
</reference>
<evidence type="ECO:0000250" key="1"/>
<evidence type="ECO:0000255" key="2">
    <source>
        <dbReference type="HAMAP-Rule" id="MF_00742"/>
    </source>
</evidence>
<gene>
    <name evidence="2" type="primary">frc</name>
    <name type="ordered locus">SbBS512_E2743</name>
</gene>
<keyword id="KW-1185">Reference proteome</keyword>
<keyword id="KW-0808">Transferase</keyword>